<reference key="1">
    <citation type="journal article" date="2004" name="PLoS Biol.">
        <title>Genomic insights into methanotrophy: the complete genome sequence of Methylococcus capsulatus (Bath).</title>
        <authorList>
            <person name="Ward N.L."/>
            <person name="Larsen O."/>
            <person name="Sakwa J."/>
            <person name="Bruseth L."/>
            <person name="Khouri H.M."/>
            <person name="Durkin A.S."/>
            <person name="Dimitrov G."/>
            <person name="Jiang L."/>
            <person name="Scanlan D."/>
            <person name="Kang K.H."/>
            <person name="Lewis M.R."/>
            <person name="Nelson K.E."/>
            <person name="Methe B.A."/>
            <person name="Wu M."/>
            <person name="Heidelberg J.F."/>
            <person name="Paulsen I.T."/>
            <person name="Fouts D.E."/>
            <person name="Ravel J."/>
            <person name="Tettelin H."/>
            <person name="Ren Q."/>
            <person name="Read T.D."/>
            <person name="DeBoy R.T."/>
            <person name="Seshadri R."/>
            <person name="Salzberg S.L."/>
            <person name="Jensen H.B."/>
            <person name="Birkeland N.K."/>
            <person name="Nelson W.C."/>
            <person name="Dodson R.J."/>
            <person name="Grindhaug S.H."/>
            <person name="Holt I.E."/>
            <person name="Eidhammer I."/>
            <person name="Jonasen I."/>
            <person name="Vanaken S."/>
            <person name="Utterback T.R."/>
            <person name="Feldblyum T.V."/>
            <person name="Fraser C.M."/>
            <person name="Lillehaug J.R."/>
            <person name="Eisen J.A."/>
        </authorList>
    </citation>
    <scope>NUCLEOTIDE SEQUENCE [LARGE SCALE GENOMIC DNA]</scope>
    <source>
        <strain>ATCC 33009 / NCIMB 11132 / Bath</strain>
    </source>
</reference>
<name>SYFA_METCA</name>
<sequence>MNSSPESTLEQASRLLAAAGSVAELDQVRVRYLGKKGEFTEQMKTLGTLSPEERKEFGQRVNQARDEFQRLLERRKAALEAEALARRLSSETIDVTLPGRGQRLGGLHPVTLTLRRITRLFRSVGFSVVEGPEIEDDFHNFEALNIPAHHPARAMHDTFYFSEHLLLRTHTSPVQIRVMESGQPPLRVIAPGRVYRCDSDLTHTPMFHQVEGFWVDEQVSFADLKGTLYEFLTGFFEKDCAVRFRPSYFPFTEPSAEVDIECVICDGRGCRVCKHSGWLEVMGCGMIHPRVFEAVGIDPERYSGFAFGLGVERLTMLRYGINDLRLFFENDLRFLRQFKPF</sequence>
<accession>Q60AZ0</accession>
<evidence type="ECO:0000255" key="1">
    <source>
        <dbReference type="HAMAP-Rule" id="MF_00281"/>
    </source>
</evidence>
<dbReference type="EC" id="6.1.1.20" evidence="1"/>
<dbReference type="EMBL" id="AE017282">
    <property type="protein sequence ID" value="AAU93165.1"/>
    <property type="molecule type" value="Genomic_DNA"/>
</dbReference>
<dbReference type="SMR" id="Q60AZ0"/>
<dbReference type="STRING" id="243233.MCA0697"/>
<dbReference type="KEGG" id="mca:MCA0697"/>
<dbReference type="eggNOG" id="COG0016">
    <property type="taxonomic scope" value="Bacteria"/>
</dbReference>
<dbReference type="HOGENOM" id="CLU_025086_0_1_6"/>
<dbReference type="Proteomes" id="UP000006821">
    <property type="component" value="Chromosome"/>
</dbReference>
<dbReference type="GO" id="GO:0005737">
    <property type="term" value="C:cytoplasm"/>
    <property type="evidence" value="ECO:0007669"/>
    <property type="project" value="UniProtKB-SubCell"/>
</dbReference>
<dbReference type="GO" id="GO:0005524">
    <property type="term" value="F:ATP binding"/>
    <property type="evidence" value="ECO:0007669"/>
    <property type="project" value="UniProtKB-UniRule"/>
</dbReference>
<dbReference type="GO" id="GO:0000287">
    <property type="term" value="F:magnesium ion binding"/>
    <property type="evidence" value="ECO:0007669"/>
    <property type="project" value="UniProtKB-UniRule"/>
</dbReference>
<dbReference type="GO" id="GO:0004826">
    <property type="term" value="F:phenylalanine-tRNA ligase activity"/>
    <property type="evidence" value="ECO:0007669"/>
    <property type="project" value="UniProtKB-UniRule"/>
</dbReference>
<dbReference type="GO" id="GO:0000049">
    <property type="term" value="F:tRNA binding"/>
    <property type="evidence" value="ECO:0007669"/>
    <property type="project" value="InterPro"/>
</dbReference>
<dbReference type="GO" id="GO:0006432">
    <property type="term" value="P:phenylalanyl-tRNA aminoacylation"/>
    <property type="evidence" value="ECO:0007669"/>
    <property type="project" value="UniProtKB-UniRule"/>
</dbReference>
<dbReference type="CDD" id="cd00496">
    <property type="entry name" value="PheRS_alpha_core"/>
    <property type="match status" value="1"/>
</dbReference>
<dbReference type="FunFam" id="3.30.930.10:FF:000003">
    <property type="entry name" value="Phenylalanine--tRNA ligase alpha subunit"/>
    <property type="match status" value="1"/>
</dbReference>
<dbReference type="Gene3D" id="3.30.930.10">
    <property type="entry name" value="Bira Bifunctional Protein, Domain 2"/>
    <property type="match status" value="1"/>
</dbReference>
<dbReference type="HAMAP" id="MF_00281">
    <property type="entry name" value="Phe_tRNA_synth_alpha1"/>
    <property type="match status" value="1"/>
</dbReference>
<dbReference type="InterPro" id="IPR006195">
    <property type="entry name" value="aa-tRNA-synth_II"/>
</dbReference>
<dbReference type="InterPro" id="IPR045864">
    <property type="entry name" value="aa-tRNA-synth_II/BPL/LPL"/>
</dbReference>
<dbReference type="InterPro" id="IPR004529">
    <property type="entry name" value="Phe-tRNA-synth_IIc_asu"/>
</dbReference>
<dbReference type="InterPro" id="IPR004188">
    <property type="entry name" value="Phe-tRNA_ligase_II_N"/>
</dbReference>
<dbReference type="InterPro" id="IPR022911">
    <property type="entry name" value="Phe_tRNA_ligase_alpha1_bac"/>
</dbReference>
<dbReference type="InterPro" id="IPR002319">
    <property type="entry name" value="Phenylalanyl-tRNA_Synthase"/>
</dbReference>
<dbReference type="InterPro" id="IPR010978">
    <property type="entry name" value="tRNA-bd_arm"/>
</dbReference>
<dbReference type="NCBIfam" id="TIGR00468">
    <property type="entry name" value="pheS"/>
    <property type="match status" value="1"/>
</dbReference>
<dbReference type="PANTHER" id="PTHR11538:SF41">
    <property type="entry name" value="PHENYLALANINE--TRNA LIGASE, MITOCHONDRIAL"/>
    <property type="match status" value="1"/>
</dbReference>
<dbReference type="PANTHER" id="PTHR11538">
    <property type="entry name" value="PHENYLALANYL-TRNA SYNTHETASE"/>
    <property type="match status" value="1"/>
</dbReference>
<dbReference type="Pfam" id="PF02912">
    <property type="entry name" value="Phe_tRNA-synt_N"/>
    <property type="match status" value="1"/>
</dbReference>
<dbReference type="Pfam" id="PF01409">
    <property type="entry name" value="tRNA-synt_2d"/>
    <property type="match status" value="1"/>
</dbReference>
<dbReference type="SUPFAM" id="SSF55681">
    <property type="entry name" value="Class II aaRS and biotin synthetases"/>
    <property type="match status" value="1"/>
</dbReference>
<dbReference type="SUPFAM" id="SSF46589">
    <property type="entry name" value="tRNA-binding arm"/>
    <property type="match status" value="1"/>
</dbReference>
<dbReference type="PROSITE" id="PS50862">
    <property type="entry name" value="AA_TRNA_LIGASE_II"/>
    <property type="match status" value="1"/>
</dbReference>
<protein>
    <recommendedName>
        <fullName evidence="1">Phenylalanine--tRNA ligase alpha subunit</fullName>
        <ecNumber evidence="1">6.1.1.20</ecNumber>
    </recommendedName>
    <alternativeName>
        <fullName evidence="1">Phenylalanyl-tRNA synthetase alpha subunit</fullName>
        <shortName evidence="1">PheRS</shortName>
    </alternativeName>
</protein>
<feature type="chain" id="PRO_0000231993" description="Phenylalanine--tRNA ligase alpha subunit">
    <location>
        <begin position="1"/>
        <end position="341"/>
    </location>
</feature>
<feature type="binding site" evidence="1">
    <location>
        <position position="253"/>
    </location>
    <ligand>
        <name>Mg(2+)</name>
        <dbReference type="ChEBI" id="CHEBI:18420"/>
        <note>shared with beta subunit</note>
    </ligand>
</feature>
<comment type="catalytic activity">
    <reaction evidence="1">
        <text>tRNA(Phe) + L-phenylalanine + ATP = L-phenylalanyl-tRNA(Phe) + AMP + diphosphate + H(+)</text>
        <dbReference type="Rhea" id="RHEA:19413"/>
        <dbReference type="Rhea" id="RHEA-COMP:9668"/>
        <dbReference type="Rhea" id="RHEA-COMP:9699"/>
        <dbReference type="ChEBI" id="CHEBI:15378"/>
        <dbReference type="ChEBI" id="CHEBI:30616"/>
        <dbReference type="ChEBI" id="CHEBI:33019"/>
        <dbReference type="ChEBI" id="CHEBI:58095"/>
        <dbReference type="ChEBI" id="CHEBI:78442"/>
        <dbReference type="ChEBI" id="CHEBI:78531"/>
        <dbReference type="ChEBI" id="CHEBI:456215"/>
        <dbReference type="EC" id="6.1.1.20"/>
    </reaction>
</comment>
<comment type="cofactor">
    <cofactor evidence="1">
        <name>Mg(2+)</name>
        <dbReference type="ChEBI" id="CHEBI:18420"/>
    </cofactor>
    <text evidence="1">Binds 2 magnesium ions per tetramer.</text>
</comment>
<comment type="subunit">
    <text evidence="1">Tetramer of two alpha and two beta subunits.</text>
</comment>
<comment type="subcellular location">
    <subcellularLocation>
        <location evidence="1">Cytoplasm</location>
    </subcellularLocation>
</comment>
<comment type="similarity">
    <text evidence="1">Belongs to the class-II aminoacyl-tRNA synthetase family. Phe-tRNA synthetase alpha subunit type 1 subfamily.</text>
</comment>
<gene>
    <name evidence="1" type="primary">pheS</name>
    <name type="ordered locus">MCA0697</name>
</gene>
<keyword id="KW-0030">Aminoacyl-tRNA synthetase</keyword>
<keyword id="KW-0067">ATP-binding</keyword>
<keyword id="KW-0963">Cytoplasm</keyword>
<keyword id="KW-0436">Ligase</keyword>
<keyword id="KW-0460">Magnesium</keyword>
<keyword id="KW-0479">Metal-binding</keyword>
<keyword id="KW-0547">Nucleotide-binding</keyword>
<keyword id="KW-0648">Protein biosynthesis</keyword>
<keyword id="KW-1185">Reference proteome</keyword>
<proteinExistence type="inferred from homology"/>
<organism>
    <name type="scientific">Methylococcus capsulatus (strain ATCC 33009 / NCIMB 11132 / Bath)</name>
    <dbReference type="NCBI Taxonomy" id="243233"/>
    <lineage>
        <taxon>Bacteria</taxon>
        <taxon>Pseudomonadati</taxon>
        <taxon>Pseudomonadota</taxon>
        <taxon>Gammaproteobacteria</taxon>
        <taxon>Methylococcales</taxon>
        <taxon>Methylococcaceae</taxon>
        <taxon>Methylococcus</taxon>
    </lineage>
</organism>